<proteinExistence type="inferred from homology"/>
<comment type="function">
    <text evidence="1">Catalyzes the stereoinversion of LL-2,6-diaminopimelate (L,L-DAP) to meso-diaminopimelate (meso-DAP), a precursor of L-lysine and an essential component of the bacterial peptidoglycan.</text>
</comment>
<comment type="catalytic activity">
    <reaction evidence="1">
        <text>(2S,6S)-2,6-diaminopimelate = meso-2,6-diaminopimelate</text>
        <dbReference type="Rhea" id="RHEA:15393"/>
        <dbReference type="ChEBI" id="CHEBI:57609"/>
        <dbReference type="ChEBI" id="CHEBI:57791"/>
        <dbReference type="EC" id="5.1.1.7"/>
    </reaction>
</comment>
<comment type="pathway">
    <text evidence="1">Amino-acid biosynthesis; L-lysine biosynthesis via DAP pathway; DL-2,6-diaminopimelate from LL-2,6-diaminopimelate: step 1/1.</text>
</comment>
<comment type="subunit">
    <text evidence="1">Homodimer.</text>
</comment>
<comment type="subcellular location">
    <subcellularLocation>
        <location evidence="1">Cytoplasm</location>
    </subcellularLocation>
</comment>
<comment type="similarity">
    <text evidence="1">Belongs to the diaminopimelate epimerase family.</text>
</comment>
<accession>B7NFB1</accession>
<gene>
    <name evidence="1" type="primary">dapF</name>
    <name type="ordered locus">ECUMN_4334</name>
</gene>
<sequence length="274" mass="30209">MQFSKMHGLGNDFMVVDAVTQNVFFSPELIRRLADRHLGVGFDQLLVVEPPYDPELDFHYRIFNADGSEVAQCGNGARCFARFVRLKGLTNKRDIRVSTANGRMVLTVTDDDLVRVNMGEPNFEPSAVPFRANKAEKTYIMRAAEQTILCGVVSMGNPHCVIQVDDVDTAAVETLGPVLESHERFPERANIGFMQVVKREHIRLRVYERGAGETQACGSGACAAVAVGIQQGLLAEEVRVELPGGRLDIAWKGPGHPLYMTGPAVHVYDGFIHL</sequence>
<feature type="chain" id="PRO_1000118670" description="Diaminopimelate epimerase">
    <location>
        <begin position="1"/>
        <end position="274"/>
    </location>
</feature>
<feature type="active site" description="Proton donor" evidence="1">
    <location>
        <position position="73"/>
    </location>
</feature>
<feature type="active site" description="Proton acceptor" evidence="1">
    <location>
        <position position="217"/>
    </location>
</feature>
<feature type="binding site" evidence="1">
    <location>
        <position position="11"/>
    </location>
    <ligand>
        <name>substrate</name>
    </ligand>
</feature>
<feature type="binding site" evidence="1">
    <location>
        <position position="44"/>
    </location>
    <ligand>
        <name>substrate</name>
    </ligand>
</feature>
<feature type="binding site" evidence="1">
    <location>
        <position position="64"/>
    </location>
    <ligand>
        <name>substrate</name>
    </ligand>
</feature>
<feature type="binding site" evidence="1">
    <location>
        <begin position="74"/>
        <end position="75"/>
    </location>
    <ligand>
        <name>substrate</name>
    </ligand>
</feature>
<feature type="binding site" evidence="1">
    <location>
        <position position="157"/>
    </location>
    <ligand>
        <name>substrate</name>
    </ligand>
</feature>
<feature type="binding site" evidence="1">
    <location>
        <position position="190"/>
    </location>
    <ligand>
        <name>substrate</name>
    </ligand>
</feature>
<feature type="binding site" evidence="1">
    <location>
        <begin position="208"/>
        <end position="209"/>
    </location>
    <ligand>
        <name>substrate</name>
    </ligand>
</feature>
<feature type="binding site" evidence="1">
    <location>
        <begin position="218"/>
        <end position="219"/>
    </location>
    <ligand>
        <name>substrate</name>
    </ligand>
</feature>
<feature type="site" description="Could be important to modulate the pK values of the two catalytic cysteine residues" evidence="1">
    <location>
        <position position="159"/>
    </location>
</feature>
<feature type="site" description="Could be important to modulate the pK values of the two catalytic cysteine residues" evidence="1">
    <location>
        <position position="208"/>
    </location>
</feature>
<feature type="site" description="Important for dimerization" evidence="1">
    <location>
        <position position="268"/>
    </location>
</feature>
<reference key="1">
    <citation type="journal article" date="2009" name="PLoS Genet.">
        <title>Organised genome dynamics in the Escherichia coli species results in highly diverse adaptive paths.</title>
        <authorList>
            <person name="Touchon M."/>
            <person name="Hoede C."/>
            <person name="Tenaillon O."/>
            <person name="Barbe V."/>
            <person name="Baeriswyl S."/>
            <person name="Bidet P."/>
            <person name="Bingen E."/>
            <person name="Bonacorsi S."/>
            <person name="Bouchier C."/>
            <person name="Bouvet O."/>
            <person name="Calteau A."/>
            <person name="Chiapello H."/>
            <person name="Clermont O."/>
            <person name="Cruveiller S."/>
            <person name="Danchin A."/>
            <person name="Diard M."/>
            <person name="Dossat C."/>
            <person name="Karoui M.E."/>
            <person name="Frapy E."/>
            <person name="Garry L."/>
            <person name="Ghigo J.M."/>
            <person name="Gilles A.M."/>
            <person name="Johnson J."/>
            <person name="Le Bouguenec C."/>
            <person name="Lescat M."/>
            <person name="Mangenot S."/>
            <person name="Martinez-Jehanne V."/>
            <person name="Matic I."/>
            <person name="Nassif X."/>
            <person name="Oztas S."/>
            <person name="Petit M.A."/>
            <person name="Pichon C."/>
            <person name="Rouy Z."/>
            <person name="Ruf C.S."/>
            <person name="Schneider D."/>
            <person name="Tourret J."/>
            <person name="Vacherie B."/>
            <person name="Vallenet D."/>
            <person name="Medigue C."/>
            <person name="Rocha E.P.C."/>
            <person name="Denamur E."/>
        </authorList>
    </citation>
    <scope>NUCLEOTIDE SEQUENCE [LARGE SCALE GENOMIC DNA]</scope>
    <source>
        <strain>UMN026 / ExPEC</strain>
    </source>
</reference>
<protein>
    <recommendedName>
        <fullName evidence="1">Diaminopimelate epimerase</fullName>
        <shortName evidence="1">DAP epimerase</shortName>
        <ecNumber evidence="1">5.1.1.7</ecNumber>
    </recommendedName>
    <alternativeName>
        <fullName evidence="1">PLP-independent amino acid racemase</fullName>
    </alternativeName>
</protein>
<name>DAPF_ECOLU</name>
<evidence type="ECO:0000255" key="1">
    <source>
        <dbReference type="HAMAP-Rule" id="MF_00197"/>
    </source>
</evidence>
<keyword id="KW-0028">Amino-acid biosynthesis</keyword>
<keyword id="KW-0963">Cytoplasm</keyword>
<keyword id="KW-0413">Isomerase</keyword>
<keyword id="KW-0457">Lysine biosynthesis</keyword>
<dbReference type="EC" id="5.1.1.7" evidence="1"/>
<dbReference type="EMBL" id="CU928163">
    <property type="protein sequence ID" value="CAR15467.1"/>
    <property type="molecule type" value="Genomic_DNA"/>
</dbReference>
<dbReference type="RefSeq" id="WP_001160654.1">
    <property type="nucleotide sequence ID" value="NC_011751.1"/>
</dbReference>
<dbReference type="RefSeq" id="YP_002414962.1">
    <property type="nucleotide sequence ID" value="NC_011751.1"/>
</dbReference>
<dbReference type="SMR" id="B7NFB1"/>
<dbReference type="STRING" id="585056.ECUMN_4334"/>
<dbReference type="GeneID" id="93778134"/>
<dbReference type="KEGG" id="eum:ECUMN_4334"/>
<dbReference type="PATRIC" id="fig|585056.7.peg.4501"/>
<dbReference type="HOGENOM" id="CLU_053306_1_1_6"/>
<dbReference type="UniPathway" id="UPA00034">
    <property type="reaction ID" value="UER00025"/>
</dbReference>
<dbReference type="Proteomes" id="UP000007097">
    <property type="component" value="Chromosome"/>
</dbReference>
<dbReference type="GO" id="GO:0005829">
    <property type="term" value="C:cytosol"/>
    <property type="evidence" value="ECO:0007669"/>
    <property type="project" value="TreeGrafter"/>
</dbReference>
<dbReference type="GO" id="GO:0008837">
    <property type="term" value="F:diaminopimelate epimerase activity"/>
    <property type="evidence" value="ECO:0007669"/>
    <property type="project" value="UniProtKB-UniRule"/>
</dbReference>
<dbReference type="GO" id="GO:0009089">
    <property type="term" value="P:lysine biosynthetic process via diaminopimelate"/>
    <property type="evidence" value="ECO:0007669"/>
    <property type="project" value="UniProtKB-UniRule"/>
</dbReference>
<dbReference type="FunFam" id="3.10.310.10:FF:000001">
    <property type="entry name" value="Diaminopimelate epimerase"/>
    <property type="match status" value="1"/>
</dbReference>
<dbReference type="FunFam" id="3.10.310.10:FF:000002">
    <property type="entry name" value="Diaminopimelate epimerase"/>
    <property type="match status" value="1"/>
</dbReference>
<dbReference type="Gene3D" id="3.10.310.10">
    <property type="entry name" value="Diaminopimelate Epimerase, Chain A, domain 1"/>
    <property type="match status" value="2"/>
</dbReference>
<dbReference type="HAMAP" id="MF_00197">
    <property type="entry name" value="DAP_epimerase"/>
    <property type="match status" value="1"/>
</dbReference>
<dbReference type="InterPro" id="IPR018510">
    <property type="entry name" value="DAP_epimerase_AS"/>
</dbReference>
<dbReference type="InterPro" id="IPR001653">
    <property type="entry name" value="DAP_epimerase_DapF"/>
</dbReference>
<dbReference type="NCBIfam" id="TIGR00652">
    <property type="entry name" value="DapF"/>
    <property type="match status" value="1"/>
</dbReference>
<dbReference type="PANTHER" id="PTHR31689:SF0">
    <property type="entry name" value="DIAMINOPIMELATE EPIMERASE"/>
    <property type="match status" value="1"/>
</dbReference>
<dbReference type="PANTHER" id="PTHR31689">
    <property type="entry name" value="DIAMINOPIMELATE EPIMERASE, CHLOROPLASTIC"/>
    <property type="match status" value="1"/>
</dbReference>
<dbReference type="Pfam" id="PF01678">
    <property type="entry name" value="DAP_epimerase"/>
    <property type="match status" value="2"/>
</dbReference>
<dbReference type="SUPFAM" id="SSF54506">
    <property type="entry name" value="Diaminopimelate epimerase-like"/>
    <property type="match status" value="1"/>
</dbReference>
<dbReference type="PROSITE" id="PS01326">
    <property type="entry name" value="DAP_EPIMERASE"/>
    <property type="match status" value="1"/>
</dbReference>
<organism>
    <name type="scientific">Escherichia coli O17:K52:H18 (strain UMN026 / ExPEC)</name>
    <dbReference type="NCBI Taxonomy" id="585056"/>
    <lineage>
        <taxon>Bacteria</taxon>
        <taxon>Pseudomonadati</taxon>
        <taxon>Pseudomonadota</taxon>
        <taxon>Gammaproteobacteria</taxon>
        <taxon>Enterobacterales</taxon>
        <taxon>Enterobacteriaceae</taxon>
        <taxon>Escherichia</taxon>
    </lineage>
</organism>